<name>LDH_STRS7</name>
<feature type="chain" id="PRO_1000206451" description="L-lactate dehydrogenase">
    <location>
        <begin position="1"/>
        <end position="327"/>
    </location>
</feature>
<feature type="active site" description="Proton acceptor" evidence="1">
    <location>
        <position position="179"/>
    </location>
</feature>
<feature type="binding site" evidence="1">
    <location>
        <position position="18"/>
    </location>
    <ligand>
        <name>NAD(+)</name>
        <dbReference type="ChEBI" id="CHEBI:57540"/>
    </ligand>
</feature>
<feature type="binding site" evidence="1">
    <location>
        <position position="39"/>
    </location>
    <ligand>
        <name>NAD(+)</name>
        <dbReference type="ChEBI" id="CHEBI:57540"/>
    </ligand>
</feature>
<feature type="binding site" evidence="1">
    <location>
        <position position="44"/>
    </location>
    <ligand>
        <name>NAD(+)</name>
        <dbReference type="ChEBI" id="CHEBI:57540"/>
    </ligand>
</feature>
<feature type="binding site" evidence="1">
    <location>
        <position position="69"/>
    </location>
    <ligand>
        <name>NAD(+)</name>
        <dbReference type="ChEBI" id="CHEBI:57540"/>
    </ligand>
</feature>
<feature type="binding site" evidence="1">
    <location>
        <begin position="83"/>
        <end position="84"/>
    </location>
    <ligand>
        <name>NAD(+)</name>
        <dbReference type="ChEBI" id="CHEBI:57540"/>
    </ligand>
</feature>
<feature type="binding site" evidence="1">
    <location>
        <position position="86"/>
    </location>
    <ligand>
        <name>substrate</name>
    </ligand>
</feature>
<feature type="binding site" evidence="1">
    <location>
        <position position="92"/>
    </location>
    <ligand>
        <name>substrate</name>
    </ligand>
</feature>
<feature type="binding site" evidence="1">
    <location>
        <begin position="122"/>
        <end position="124"/>
    </location>
    <ligand>
        <name>NAD(+)</name>
        <dbReference type="ChEBI" id="CHEBI:57540"/>
    </ligand>
</feature>
<feature type="binding site" evidence="1">
    <location>
        <begin position="124"/>
        <end position="127"/>
    </location>
    <ligand>
        <name>substrate</name>
    </ligand>
</feature>
<feature type="binding site" evidence="1">
    <location>
        <position position="147"/>
    </location>
    <ligand>
        <name>NAD(+)</name>
        <dbReference type="ChEBI" id="CHEBI:57540"/>
    </ligand>
</feature>
<feature type="binding site" evidence="1">
    <location>
        <begin position="152"/>
        <end position="155"/>
    </location>
    <ligand>
        <name>substrate</name>
    </ligand>
</feature>
<feature type="binding site" evidence="1">
    <location>
        <position position="157"/>
    </location>
    <ligand>
        <name>beta-D-fructose 1,6-bisphosphate</name>
        <dbReference type="ChEBI" id="CHEBI:32966"/>
        <note>allosteric activator</note>
    </ligand>
</feature>
<feature type="binding site" evidence="1">
    <location>
        <position position="172"/>
    </location>
    <ligand>
        <name>beta-D-fructose 1,6-bisphosphate</name>
        <dbReference type="ChEBI" id="CHEBI:32966"/>
        <note>allosteric activator</note>
    </ligand>
</feature>
<feature type="binding site" evidence="1">
    <location>
        <position position="233"/>
    </location>
    <ligand>
        <name>substrate</name>
    </ligand>
</feature>
<feature type="modified residue" description="Phosphotyrosine" evidence="1">
    <location>
        <position position="224"/>
    </location>
</feature>
<comment type="function">
    <text evidence="1">Catalyzes the conversion of lactate to pyruvate.</text>
</comment>
<comment type="catalytic activity">
    <reaction evidence="1">
        <text>(S)-lactate + NAD(+) = pyruvate + NADH + H(+)</text>
        <dbReference type="Rhea" id="RHEA:23444"/>
        <dbReference type="ChEBI" id="CHEBI:15361"/>
        <dbReference type="ChEBI" id="CHEBI:15378"/>
        <dbReference type="ChEBI" id="CHEBI:16651"/>
        <dbReference type="ChEBI" id="CHEBI:57540"/>
        <dbReference type="ChEBI" id="CHEBI:57945"/>
        <dbReference type="EC" id="1.1.1.27"/>
    </reaction>
</comment>
<comment type="activity regulation">
    <text evidence="1">Allosterically activated by fructose 1,6-bisphosphate (FBP).</text>
</comment>
<comment type="pathway">
    <text evidence="1">Fermentation; pyruvate fermentation to lactate; (S)-lactate from pyruvate: step 1/1.</text>
</comment>
<comment type="subunit">
    <text evidence="1">Homotetramer.</text>
</comment>
<comment type="subcellular location">
    <subcellularLocation>
        <location evidence="1">Cytoplasm</location>
    </subcellularLocation>
</comment>
<comment type="similarity">
    <text evidence="1">Belongs to the LDH/MDH superfamily. LDH family.</text>
</comment>
<evidence type="ECO:0000255" key="1">
    <source>
        <dbReference type="HAMAP-Rule" id="MF_00488"/>
    </source>
</evidence>
<organism>
    <name type="scientific">Streptococcus equi subsp. zooepidemicus (strain H70)</name>
    <dbReference type="NCBI Taxonomy" id="553483"/>
    <lineage>
        <taxon>Bacteria</taxon>
        <taxon>Bacillati</taxon>
        <taxon>Bacillota</taxon>
        <taxon>Bacilli</taxon>
        <taxon>Lactobacillales</taxon>
        <taxon>Streptococcaceae</taxon>
        <taxon>Streptococcus</taxon>
    </lineage>
</organism>
<dbReference type="EC" id="1.1.1.27" evidence="1"/>
<dbReference type="EMBL" id="FM204884">
    <property type="protein sequence ID" value="CAW99215.1"/>
    <property type="molecule type" value="Genomic_DNA"/>
</dbReference>
<dbReference type="SMR" id="C0MFB5"/>
<dbReference type="KEGG" id="seq:SZO_09420"/>
<dbReference type="eggNOG" id="COG0039">
    <property type="taxonomic scope" value="Bacteria"/>
</dbReference>
<dbReference type="HOGENOM" id="CLU_045401_1_1_9"/>
<dbReference type="UniPathway" id="UPA00554">
    <property type="reaction ID" value="UER00611"/>
</dbReference>
<dbReference type="Proteomes" id="UP000001368">
    <property type="component" value="Chromosome"/>
</dbReference>
<dbReference type="GO" id="GO:0005737">
    <property type="term" value="C:cytoplasm"/>
    <property type="evidence" value="ECO:0007669"/>
    <property type="project" value="UniProtKB-SubCell"/>
</dbReference>
<dbReference type="GO" id="GO:0004459">
    <property type="term" value="F:L-lactate dehydrogenase activity"/>
    <property type="evidence" value="ECO:0007669"/>
    <property type="project" value="UniProtKB-UniRule"/>
</dbReference>
<dbReference type="GO" id="GO:0006096">
    <property type="term" value="P:glycolytic process"/>
    <property type="evidence" value="ECO:0007669"/>
    <property type="project" value="UniProtKB-UniRule"/>
</dbReference>
<dbReference type="GO" id="GO:0006089">
    <property type="term" value="P:lactate metabolic process"/>
    <property type="evidence" value="ECO:0007669"/>
    <property type="project" value="TreeGrafter"/>
</dbReference>
<dbReference type="CDD" id="cd05291">
    <property type="entry name" value="HicDH_like"/>
    <property type="match status" value="1"/>
</dbReference>
<dbReference type="FunFam" id="3.40.50.720:FF:000018">
    <property type="entry name" value="Malate dehydrogenase"/>
    <property type="match status" value="1"/>
</dbReference>
<dbReference type="Gene3D" id="3.90.110.10">
    <property type="entry name" value="Lactate dehydrogenase/glycoside hydrolase, family 4, C-terminal"/>
    <property type="match status" value="1"/>
</dbReference>
<dbReference type="Gene3D" id="3.40.50.720">
    <property type="entry name" value="NAD(P)-binding Rossmann-like Domain"/>
    <property type="match status" value="1"/>
</dbReference>
<dbReference type="HAMAP" id="MF_00488">
    <property type="entry name" value="Lactate_dehydrog"/>
    <property type="match status" value="1"/>
</dbReference>
<dbReference type="InterPro" id="IPR001557">
    <property type="entry name" value="L-lactate/malate_DH"/>
</dbReference>
<dbReference type="InterPro" id="IPR011304">
    <property type="entry name" value="L-lactate_DH"/>
</dbReference>
<dbReference type="InterPro" id="IPR018177">
    <property type="entry name" value="L-lactate_DH_AS"/>
</dbReference>
<dbReference type="InterPro" id="IPR022383">
    <property type="entry name" value="Lactate/malate_DH_C"/>
</dbReference>
<dbReference type="InterPro" id="IPR001236">
    <property type="entry name" value="Lactate/malate_DH_N"/>
</dbReference>
<dbReference type="InterPro" id="IPR015955">
    <property type="entry name" value="Lactate_DH/Glyco_Ohase_4_C"/>
</dbReference>
<dbReference type="InterPro" id="IPR036291">
    <property type="entry name" value="NAD(P)-bd_dom_sf"/>
</dbReference>
<dbReference type="NCBIfam" id="TIGR01771">
    <property type="entry name" value="L-LDH-NAD"/>
    <property type="match status" value="1"/>
</dbReference>
<dbReference type="NCBIfam" id="NF000824">
    <property type="entry name" value="PRK00066.1"/>
    <property type="match status" value="1"/>
</dbReference>
<dbReference type="PANTHER" id="PTHR43128">
    <property type="entry name" value="L-2-HYDROXYCARBOXYLATE DEHYDROGENASE (NAD(P)(+))"/>
    <property type="match status" value="1"/>
</dbReference>
<dbReference type="PANTHER" id="PTHR43128:SF16">
    <property type="entry name" value="L-LACTATE DEHYDROGENASE"/>
    <property type="match status" value="1"/>
</dbReference>
<dbReference type="Pfam" id="PF02866">
    <property type="entry name" value="Ldh_1_C"/>
    <property type="match status" value="1"/>
</dbReference>
<dbReference type="Pfam" id="PF00056">
    <property type="entry name" value="Ldh_1_N"/>
    <property type="match status" value="1"/>
</dbReference>
<dbReference type="PIRSF" id="PIRSF000102">
    <property type="entry name" value="Lac_mal_DH"/>
    <property type="match status" value="1"/>
</dbReference>
<dbReference type="PRINTS" id="PR00086">
    <property type="entry name" value="LLDHDRGNASE"/>
</dbReference>
<dbReference type="SUPFAM" id="SSF56327">
    <property type="entry name" value="LDH C-terminal domain-like"/>
    <property type="match status" value="1"/>
</dbReference>
<dbReference type="SUPFAM" id="SSF51735">
    <property type="entry name" value="NAD(P)-binding Rossmann-fold domains"/>
    <property type="match status" value="1"/>
</dbReference>
<dbReference type="PROSITE" id="PS00064">
    <property type="entry name" value="L_LDH"/>
    <property type="match status" value="1"/>
</dbReference>
<proteinExistence type="inferred from homology"/>
<sequence length="327" mass="35272">MTATKQHKKVILVGDGAVGSSYAFALVTQNIAQELGIIDIFKEKTQGDAEDLSHALAFTSPKKIYAADYADCHDADLVVLTAGAPQKPGETRLDLVEKNLRINKEVVTQIVASGFKGIFLVAANPVDILTYSTWKFSGFPKERVIGSGTSLDSARFRQALAAKIGVDARSVHAYIMGEHGDSEFAVWSHANVAGVGLYDWLQANRDVDEQGLVDLFISVRDAAYSIINKKGATFYGIAVALARITKAILDDENAVLPLSVFQEGQYEGVEDCYIGQPAIVGAYGIVRPVNIPLNDAELQKMQASANQLKAIIDEAFSKEEFASAAKN</sequence>
<accession>C0MFB5</accession>
<keyword id="KW-0021">Allosteric enzyme</keyword>
<keyword id="KW-0963">Cytoplasm</keyword>
<keyword id="KW-0520">NAD</keyword>
<keyword id="KW-0560">Oxidoreductase</keyword>
<keyword id="KW-0597">Phosphoprotein</keyword>
<reference key="1">
    <citation type="journal article" date="2009" name="PLoS Pathog.">
        <title>Genomic evidence for the evolution of Streptococcus equi: host restriction, increased virulence, and genetic exchange with human pathogens.</title>
        <authorList>
            <person name="Holden M.T.G."/>
            <person name="Heather Z."/>
            <person name="Paillot R."/>
            <person name="Steward K.F."/>
            <person name="Webb K."/>
            <person name="Ainslie F."/>
            <person name="Jourdan T."/>
            <person name="Bason N.C."/>
            <person name="Holroyd N.E."/>
            <person name="Mungall K."/>
            <person name="Quail M.A."/>
            <person name="Sanders M."/>
            <person name="Simmonds M."/>
            <person name="Willey D."/>
            <person name="Brooks K."/>
            <person name="Aanensen D.M."/>
            <person name="Spratt B.G."/>
            <person name="Jolley K.A."/>
            <person name="Maiden M.C.J."/>
            <person name="Kehoe M."/>
            <person name="Chanter N."/>
            <person name="Bentley S.D."/>
            <person name="Robinson C."/>
            <person name="Maskell D.J."/>
            <person name="Parkhill J."/>
            <person name="Waller A.S."/>
        </authorList>
    </citation>
    <scope>NUCLEOTIDE SEQUENCE [LARGE SCALE GENOMIC DNA]</scope>
    <source>
        <strain>H70</strain>
    </source>
</reference>
<gene>
    <name evidence="1" type="primary">ldh</name>
    <name type="ordered locus">SZO_09420</name>
</gene>
<protein>
    <recommendedName>
        <fullName evidence="1">L-lactate dehydrogenase</fullName>
        <shortName evidence="1">L-LDH</shortName>
        <ecNumber evidence="1">1.1.1.27</ecNumber>
    </recommendedName>
</protein>